<dbReference type="EC" id="3.6.1.27" evidence="1"/>
<dbReference type="EMBL" id="CR543861">
    <property type="protein sequence ID" value="CAG67594.1"/>
    <property type="molecule type" value="Genomic_DNA"/>
</dbReference>
<dbReference type="RefSeq" id="WP_004922656.1">
    <property type="nucleotide sequence ID" value="NC_005966.1"/>
</dbReference>
<dbReference type="SMR" id="Q6FEB4"/>
<dbReference type="STRING" id="202950.GCA_001485005_02444"/>
<dbReference type="GeneID" id="45233154"/>
<dbReference type="KEGG" id="aci:ACIAD0678"/>
<dbReference type="eggNOG" id="COG1968">
    <property type="taxonomic scope" value="Bacteria"/>
</dbReference>
<dbReference type="HOGENOM" id="CLU_060296_2_0_6"/>
<dbReference type="OrthoDB" id="9808289at2"/>
<dbReference type="BioCyc" id="ASP62977:ACIAD_RS03130-MONOMER"/>
<dbReference type="Proteomes" id="UP000000430">
    <property type="component" value="Chromosome"/>
</dbReference>
<dbReference type="GO" id="GO:0005886">
    <property type="term" value="C:plasma membrane"/>
    <property type="evidence" value="ECO:0007669"/>
    <property type="project" value="UniProtKB-SubCell"/>
</dbReference>
<dbReference type="GO" id="GO:0050380">
    <property type="term" value="F:undecaprenyl-diphosphatase activity"/>
    <property type="evidence" value="ECO:0007669"/>
    <property type="project" value="UniProtKB-UniRule"/>
</dbReference>
<dbReference type="GO" id="GO:0071555">
    <property type="term" value="P:cell wall organization"/>
    <property type="evidence" value="ECO:0007669"/>
    <property type="project" value="UniProtKB-KW"/>
</dbReference>
<dbReference type="GO" id="GO:0009252">
    <property type="term" value="P:peptidoglycan biosynthetic process"/>
    <property type="evidence" value="ECO:0007669"/>
    <property type="project" value="UniProtKB-KW"/>
</dbReference>
<dbReference type="GO" id="GO:0008360">
    <property type="term" value="P:regulation of cell shape"/>
    <property type="evidence" value="ECO:0007669"/>
    <property type="project" value="UniProtKB-KW"/>
</dbReference>
<dbReference type="GO" id="GO:0046677">
    <property type="term" value="P:response to antibiotic"/>
    <property type="evidence" value="ECO:0007669"/>
    <property type="project" value="UniProtKB-UniRule"/>
</dbReference>
<dbReference type="HAMAP" id="MF_01006">
    <property type="entry name" value="Undec_diphosphatase"/>
    <property type="match status" value="1"/>
</dbReference>
<dbReference type="InterPro" id="IPR003824">
    <property type="entry name" value="UppP"/>
</dbReference>
<dbReference type="NCBIfam" id="NF001389">
    <property type="entry name" value="PRK00281.1-2"/>
    <property type="match status" value="1"/>
</dbReference>
<dbReference type="NCBIfam" id="NF001390">
    <property type="entry name" value="PRK00281.1-4"/>
    <property type="match status" value="1"/>
</dbReference>
<dbReference type="NCBIfam" id="TIGR00753">
    <property type="entry name" value="undec_PP_bacA"/>
    <property type="match status" value="1"/>
</dbReference>
<dbReference type="PANTHER" id="PTHR30622">
    <property type="entry name" value="UNDECAPRENYL-DIPHOSPHATASE"/>
    <property type="match status" value="1"/>
</dbReference>
<dbReference type="PANTHER" id="PTHR30622:SF3">
    <property type="entry name" value="UNDECAPRENYL-DIPHOSPHATASE"/>
    <property type="match status" value="1"/>
</dbReference>
<dbReference type="Pfam" id="PF02673">
    <property type="entry name" value="BacA"/>
    <property type="match status" value="1"/>
</dbReference>
<reference key="1">
    <citation type="journal article" date="2004" name="Nucleic Acids Res.">
        <title>Unique features revealed by the genome sequence of Acinetobacter sp. ADP1, a versatile and naturally transformation competent bacterium.</title>
        <authorList>
            <person name="Barbe V."/>
            <person name="Vallenet D."/>
            <person name="Fonknechten N."/>
            <person name="Kreimeyer A."/>
            <person name="Oztas S."/>
            <person name="Labarre L."/>
            <person name="Cruveiller S."/>
            <person name="Robert C."/>
            <person name="Duprat S."/>
            <person name="Wincker P."/>
            <person name="Ornston L.N."/>
            <person name="Weissenbach J."/>
            <person name="Marliere P."/>
            <person name="Cohen G.N."/>
            <person name="Medigue C."/>
        </authorList>
    </citation>
    <scope>NUCLEOTIDE SEQUENCE [LARGE SCALE GENOMIC DNA]</scope>
    <source>
        <strain>ATCC 33305 / BD413 / ADP1</strain>
    </source>
</reference>
<comment type="function">
    <text evidence="1">Catalyzes the dephosphorylation of undecaprenyl diphosphate (UPP). Confers resistance to bacitracin.</text>
</comment>
<comment type="catalytic activity">
    <reaction evidence="1">
        <text>di-trans,octa-cis-undecaprenyl diphosphate + H2O = di-trans,octa-cis-undecaprenyl phosphate + phosphate + H(+)</text>
        <dbReference type="Rhea" id="RHEA:28094"/>
        <dbReference type="ChEBI" id="CHEBI:15377"/>
        <dbReference type="ChEBI" id="CHEBI:15378"/>
        <dbReference type="ChEBI" id="CHEBI:43474"/>
        <dbReference type="ChEBI" id="CHEBI:58405"/>
        <dbReference type="ChEBI" id="CHEBI:60392"/>
        <dbReference type="EC" id="3.6.1.27"/>
    </reaction>
</comment>
<comment type="subcellular location">
    <subcellularLocation>
        <location evidence="1">Cell inner membrane</location>
        <topology evidence="1">Multi-pass membrane protein</topology>
    </subcellularLocation>
</comment>
<comment type="miscellaneous">
    <text>Bacitracin is thought to be involved in the inhibition of peptidoglycan synthesis by sequestering undecaprenyl diphosphate, thereby reducing the pool of lipid carrier available.</text>
</comment>
<comment type="similarity">
    <text evidence="1">Belongs to the UppP family.</text>
</comment>
<accession>Q6FEB4</accession>
<evidence type="ECO:0000255" key="1">
    <source>
        <dbReference type="HAMAP-Rule" id="MF_01006"/>
    </source>
</evidence>
<name>UPPP1_ACIAD</name>
<protein>
    <recommendedName>
        <fullName evidence="1">Undecaprenyl-diphosphatase 1</fullName>
        <ecNumber evidence="1">3.6.1.27</ecNumber>
    </recommendedName>
    <alternativeName>
        <fullName evidence="1">Bacitracin resistance protein 1</fullName>
    </alternativeName>
    <alternativeName>
        <fullName evidence="1">Undecaprenyl pyrophosphate phosphatase 1</fullName>
    </alternativeName>
</protein>
<proteinExistence type="inferred from homology"/>
<organism>
    <name type="scientific">Acinetobacter baylyi (strain ATCC 33305 / BD413 / ADP1)</name>
    <dbReference type="NCBI Taxonomy" id="62977"/>
    <lineage>
        <taxon>Bacteria</taxon>
        <taxon>Pseudomonadati</taxon>
        <taxon>Pseudomonadota</taxon>
        <taxon>Gammaproteobacteria</taxon>
        <taxon>Moraxellales</taxon>
        <taxon>Moraxellaceae</taxon>
        <taxon>Acinetobacter</taxon>
    </lineage>
</organism>
<sequence length="274" mass="29698">MDLLLLLKAAIMGIVEGITEFLPISSTGHLILASELMNFWTKEKSAVFVVAIQMGAIAAVIYEYWSRLWGAATGMVTGEEKGRHLAISLILASIPIVLVGLSFGQTVKDLLFNDVAVAIGLIVGGVIIMWIEKNPPKVNAVEVENIGLKQAIWIGLIQVLSLIPGTSRSGATIIGAMFLGVSRKAATEFSFFLGIPVIIGAGLLDLYQSHEVLQTSFDWSVLGVGILVSFVSALLLIRALVAYVAKRDFMVFAWYRIVSGLLILLFAYTGWTIW</sequence>
<keyword id="KW-0046">Antibiotic resistance</keyword>
<keyword id="KW-0997">Cell inner membrane</keyword>
<keyword id="KW-1003">Cell membrane</keyword>
<keyword id="KW-0133">Cell shape</keyword>
<keyword id="KW-0961">Cell wall biogenesis/degradation</keyword>
<keyword id="KW-0378">Hydrolase</keyword>
<keyword id="KW-0472">Membrane</keyword>
<keyword id="KW-0573">Peptidoglycan synthesis</keyword>
<keyword id="KW-0812">Transmembrane</keyword>
<keyword id="KW-1133">Transmembrane helix</keyword>
<gene>
    <name evidence="1" type="primary">uppP1</name>
    <name type="ordered locus">ACIAD0678</name>
</gene>
<feature type="chain" id="PRO_0000151076" description="Undecaprenyl-diphosphatase 1">
    <location>
        <begin position="1"/>
        <end position="274"/>
    </location>
</feature>
<feature type="transmembrane region" description="Helical" evidence="1">
    <location>
        <begin position="4"/>
        <end position="24"/>
    </location>
</feature>
<feature type="transmembrane region" description="Helical" evidence="1">
    <location>
        <begin position="45"/>
        <end position="65"/>
    </location>
</feature>
<feature type="transmembrane region" description="Helical" evidence="1">
    <location>
        <begin position="84"/>
        <end position="104"/>
    </location>
</feature>
<feature type="transmembrane region" description="Helical" evidence="1">
    <location>
        <begin position="111"/>
        <end position="131"/>
    </location>
</feature>
<feature type="transmembrane region" description="Helical" evidence="1">
    <location>
        <begin position="146"/>
        <end position="166"/>
    </location>
</feature>
<feature type="transmembrane region" description="Helical" evidence="1">
    <location>
        <begin position="186"/>
        <end position="206"/>
    </location>
</feature>
<feature type="transmembrane region" description="Helical" evidence="1">
    <location>
        <begin position="217"/>
        <end position="237"/>
    </location>
</feature>
<feature type="transmembrane region" description="Helical" evidence="1">
    <location>
        <begin position="249"/>
        <end position="269"/>
    </location>
</feature>